<protein>
    <recommendedName>
        <fullName evidence="7">Sodium/pantothenate symporter</fullName>
    </recommendedName>
    <alternativeName>
        <fullName evidence="6">Pantothenate permease</fullName>
    </alternativeName>
</protein>
<organism>
    <name type="scientific">Escherichia coli (strain K12)</name>
    <dbReference type="NCBI Taxonomy" id="83333"/>
    <lineage>
        <taxon>Bacteria</taxon>
        <taxon>Pseudomonadati</taxon>
        <taxon>Pseudomonadota</taxon>
        <taxon>Gammaproteobacteria</taxon>
        <taxon>Enterobacterales</taxon>
        <taxon>Enterobacteriaceae</taxon>
        <taxon>Escherichia</taxon>
    </lineage>
</organism>
<evidence type="ECO:0000255" key="1"/>
<evidence type="ECO:0000269" key="2">
    <source>
    </source>
</evidence>
<evidence type="ECO:0000269" key="3">
    <source>
    </source>
</evidence>
<evidence type="ECO:0000269" key="4">
    <source>
    </source>
</evidence>
<evidence type="ECO:0000303" key="5">
    <source>
    </source>
</evidence>
<evidence type="ECO:0000303" key="6">
    <source>
    </source>
</evidence>
<evidence type="ECO:0000305" key="7"/>
<keyword id="KW-0997">Cell inner membrane</keyword>
<keyword id="KW-1003">Cell membrane</keyword>
<keyword id="KW-0406">Ion transport</keyword>
<keyword id="KW-0472">Membrane</keyword>
<keyword id="KW-1185">Reference proteome</keyword>
<keyword id="KW-0915">Sodium</keyword>
<keyword id="KW-0739">Sodium transport</keyword>
<keyword id="KW-0769">Symport</keyword>
<keyword id="KW-0812">Transmembrane</keyword>
<keyword id="KW-1133">Transmembrane helix</keyword>
<keyword id="KW-0813">Transport</keyword>
<accession>P16256</accession>
<accession>P76679</accession>
<accession>Q2M8V7</accession>
<proteinExistence type="evidence at protein level"/>
<comment type="function">
    <text evidence="3 4">Catalyzes the sodium-dependent uptake of extracellular pantothenate.</text>
</comment>
<comment type="catalytic activity">
    <reaction evidence="4">
        <text>(R)-pantothenate(in) + Na(+)(in) = (R)-pantothenate(out) + Na(+)(out)</text>
        <dbReference type="Rhea" id="RHEA:29927"/>
        <dbReference type="ChEBI" id="CHEBI:29032"/>
        <dbReference type="ChEBI" id="CHEBI:29101"/>
    </reaction>
    <physiologicalReaction direction="right-to-left" evidence="4">
        <dbReference type="Rhea" id="RHEA:29929"/>
    </physiologicalReaction>
</comment>
<comment type="activity regulation">
    <text evidence="4">Pantothenate uptake is not reduced in osmotically shocked cells or by ATP depletion with arsenate, but is reduced greater than 90% by the dissipation of the membrane electrochemical gradient with 2,4-dinitrophenol.</text>
</comment>
<comment type="subcellular location">
    <subcellularLocation>
        <location evidence="2">Cell inner membrane</location>
        <topology evidence="1">Multi-pass membrane protein</topology>
    </subcellularLocation>
</comment>
<comment type="similarity">
    <text evidence="7">Belongs to the sodium:solute symporter (SSF) (TC 2.A.21) family.</text>
</comment>
<comment type="sequence caution" evidence="7">
    <conflict type="erroneous initiation">
        <sequence resource="EMBL-CDS" id="AAA23747"/>
    </conflict>
    <text>Extended N-terminus.</text>
</comment>
<comment type="sequence caution" evidence="7">
    <conflict type="erroneous initiation">
        <sequence resource="EMBL-CDS" id="AAA58061"/>
    </conflict>
    <text>Extended N-terminus.</text>
</comment>
<reference key="1">
    <citation type="journal article" date="1990" name="J. Bacteriol.">
        <title>Cloning, sequence, and expression of the pantothenate permease (panF) gene of Escherichia coli.</title>
        <authorList>
            <person name="Jackowski S."/>
            <person name="Alix J.-H."/>
        </authorList>
    </citation>
    <scope>NUCLEOTIDE SEQUENCE [GENOMIC DNA]</scope>
    <scope>FUNCTION</scope>
    <source>
        <strain>K12</strain>
    </source>
</reference>
<reference key="2">
    <citation type="journal article" date="1997" name="Science">
        <title>The complete genome sequence of Escherichia coli K-12.</title>
        <authorList>
            <person name="Blattner F.R."/>
            <person name="Plunkett G. III"/>
            <person name="Bloch C.A."/>
            <person name="Perna N.T."/>
            <person name="Burland V."/>
            <person name="Riley M."/>
            <person name="Collado-Vides J."/>
            <person name="Glasner J.D."/>
            <person name="Rode C.K."/>
            <person name="Mayhew G.F."/>
            <person name="Gregor J."/>
            <person name="Davis N.W."/>
            <person name="Kirkpatrick H.A."/>
            <person name="Goeden M.A."/>
            <person name="Rose D.J."/>
            <person name="Mau B."/>
            <person name="Shao Y."/>
        </authorList>
    </citation>
    <scope>NUCLEOTIDE SEQUENCE [LARGE SCALE GENOMIC DNA]</scope>
    <source>
        <strain>K12 / MG1655 / ATCC 47076</strain>
    </source>
</reference>
<reference key="3">
    <citation type="journal article" date="2006" name="Mol. Syst. Biol.">
        <title>Highly accurate genome sequences of Escherichia coli K-12 strains MG1655 and W3110.</title>
        <authorList>
            <person name="Hayashi K."/>
            <person name="Morooka N."/>
            <person name="Yamamoto Y."/>
            <person name="Fujita K."/>
            <person name="Isono K."/>
            <person name="Choi S."/>
            <person name="Ohtsubo E."/>
            <person name="Baba T."/>
            <person name="Wanner B.L."/>
            <person name="Mori H."/>
            <person name="Horiuchi T."/>
        </authorList>
    </citation>
    <scope>NUCLEOTIDE SEQUENCE [LARGE SCALE GENOMIC DNA]</scope>
    <source>
        <strain>K12 / W3110 / ATCC 27325 / DSM 5911</strain>
    </source>
</reference>
<reference key="4">
    <citation type="submission" date="1992-07" db="EMBL/GenBank/DDBJ databases">
        <title>Cloning and characterization of the E. coli fabEG operon encoding subunits of acetyl-CoA carboxylase.</title>
        <authorList>
            <person name="Best E.A."/>
            <person name="Knauf V.C."/>
        </authorList>
    </citation>
    <scope>NUCLEOTIDE SEQUENCE [GENOMIC DNA] OF 1-35</scope>
</reference>
<reference key="5">
    <citation type="journal article" date="1993" name="J. Bacteriol.">
        <title>Cotranscription of two genes necessary for ribosomal protein L11 methylation (prmA) and pantothenate transport (panF) in Escherichia coli K-12.</title>
        <authorList>
            <person name="Vanet A."/>
            <person name="Plumbridge J.A."/>
            <person name="Alix J.-H."/>
        </authorList>
    </citation>
    <scope>NUCLEOTIDE SEQUENCE [GENOMIC DNA] OF 443-483</scope>
</reference>
<reference key="6">
    <citation type="journal article" date="1985" name="J. Bacteriol.">
        <title>Pantothenate transport in Escherichia coli.</title>
        <authorList>
            <person name="Vallari D.S."/>
            <person name="Rock C.O."/>
        </authorList>
    </citation>
    <scope>FUNCTION</scope>
    <scope>CATALYTIC ACTIVITY</scope>
    <scope>ACTIVITY REGULATION</scope>
    <source>
        <strain>K12</strain>
    </source>
</reference>
<reference key="7">
    <citation type="journal article" date="2005" name="Science">
        <title>Global topology analysis of the Escherichia coli inner membrane proteome.</title>
        <authorList>
            <person name="Daley D.O."/>
            <person name="Rapp M."/>
            <person name="Granseth E."/>
            <person name="Melen K."/>
            <person name="Drew D."/>
            <person name="von Heijne G."/>
        </authorList>
    </citation>
    <scope>TOPOLOGY [LARGE SCALE ANALYSIS]</scope>
    <scope>SUBCELLULAR LOCATION</scope>
    <source>
        <strain>K12 / MG1655 / ATCC 47076</strain>
    </source>
</reference>
<feature type="chain" id="PRO_0000105402" description="Sodium/pantothenate symporter">
    <location>
        <begin position="1"/>
        <end position="483"/>
    </location>
</feature>
<feature type="topological domain" description="Periplasmic" evidence="7">
    <location>
        <begin position="1"/>
        <end position="2"/>
    </location>
</feature>
<feature type="transmembrane region" description="Helical" evidence="1">
    <location>
        <begin position="3"/>
        <end position="23"/>
    </location>
</feature>
<feature type="topological domain" description="Cytoplasmic" evidence="7">
    <location>
        <begin position="24"/>
        <end position="42"/>
    </location>
</feature>
<feature type="transmembrane region" description="Helical" evidence="1">
    <location>
        <begin position="43"/>
        <end position="63"/>
    </location>
</feature>
<feature type="topological domain" description="Periplasmic" evidence="7">
    <location>
        <begin position="64"/>
        <end position="73"/>
    </location>
</feature>
<feature type="transmembrane region" description="Helical" evidence="1">
    <location>
        <begin position="74"/>
        <end position="94"/>
    </location>
</feature>
<feature type="topological domain" description="Cytoplasmic" evidence="7">
    <location>
        <begin position="95"/>
        <end position="123"/>
    </location>
</feature>
<feature type="transmembrane region" description="Helical" evidence="1">
    <location>
        <begin position="124"/>
        <end position="144"/>
    </location>
</feature>
<feature type="topological domain" description="Periplasmic" evidence="7">
    <location>
        <begin position="145"/>
        <end position="157"/>
    </location>
</feature>
<feature type="transmembrane region" description="Helical" evidence="1">
    <location>
        <begin position="158"/>
        <end position="178"/>
    </location>
</feature>
<feature type="topological domain" description="Cytoplasmic" evidence="7">
    <location>
        <begin position="179"/>
        <end position="189"/>
    </location>
</feature>
<feature type="transmembrane region" description="Helical" evidence="1">
    <location>
        <begin position="190"/>
        <end position="210"/>
    </location>
</feature>
<feature type="topological domain" description="Periplasmic" evidence="7">
    <location>
        <begin position="211"/>
        <end position="232"/>
    </location>
</feature>
<feature type="transmembrane region" description="Helical" evidence="1">
    <location>
        <begin position="233"/>
        <end position="253"/>
    </location>
</feature>
<feature type="topological domain" description="Cytoplasmic" evidence="7">
    <location>
        <begin position="254"/>
        <end position="272"/>
    </location>
</feature>
<feature type="transmembrane region" description="Helical" evidence="1">
    <location>
        <begin position="273"/>
        <end position="293"/>
    </location>
</feature>
<feature type="topological domain" description="Periplasmic" evidence="7">
    <location>
        <begin position="294"/>
        <end position="305"/>
    </location>
</feature>
<feature type="transmembrane region" description="Helical" evidence="1">
    <location>
        <begin position="306"/>
        <end position="326"/>
    </location>
</feature>
<feature type="topological domain" description="Cytoplasmic" evidence="7">
    <location>
        <begin position="327"/>
        <end position="368"/>
    </location>
</feature>
<feature type="transmembrane region" description="Helical" evidence="1">
    <location>
        <begin position="369"/>
        <end position="389"/>
    </location>
</feature>
<feature type="topological domain" description="Periplasmic" evidence="7">
    <location>
        <begin position="390"/>
        <end position="391"/>
    </location>
</feature>
<feature type="transmembrane region" description="Helical" evidence="1">
    <location>
        <begin position="392"/>
        <end position="412"/>
    </location>
</feature>
<feature type="topological domain" description="Cytoplasmic" evidence="7">
    <location>
        <begin position="413"/>
        <end position="423"/>
    </location>
</feature>
<feature type="transmembrane region" description="Helical" evidence="1">
    <location>
        <begin position="424"/>
        <end position="444"/>
    </location>
</feature>
<feature type="topological domain" description="Periplasmic" evidence="7">
    <location>
        <position position="445"/>
    </location>
</feature>
<feature type="transmembrane region" description="Helical" evidence="1">
    <location>
        <begin position="446"/>
        <end position="466"/>
    </location>
</feature>
<feature type="topological domain" description="Cytoplasmic" evidence="2">
    <location>
        <begin position="467"/>
        <end position="483"/>
    </location>
</feature>
<feature type="sequence conflict" description="In Ref. 1; AAA24276." evidence="7" ref="1">
    <original>RASVLNDTMQGLVMLIGTVVLLIGVVHA</original>
    <variation>APAAERHHARACDADWHRCAAYWRSTC</variation>
    <location>
        <begin position="179"/>
        <end position="206"/>
    </location>
</feature>
<feature type="sequence conflict" description="In Ref. 1; AAA24276." evidence="7" ref="1">
    <original>P</original>
    <variation>A</variation>
    <location>
        <position position="254"/>
    </location>
</feature>
<feature type="sequence conflict" description="In Ref. 1; AAA24276." evidence="7" ref="1">
    <original>T</original>
    <variation>H</variation>
    <location>
        <position position="302"/>
    </location>
</feature>
<name>PANF_ECOLI</name>
<dbReference type="EMBL" id="M30953">
    <property type="protein sequence ID" value="AAA24276.1"/>
    <property type="molecule type" value="Genomic_DNA"/>
</dbReference>
<dbReference type="EMBL" id="U18997">
    <property type="protein sequence ID" value="AAA58061.1"/>
    <property type="status" value="ALT_INIT"/>
    <property type="molecule type" value="Genomic_DNA"/>
</dbReference>
<dbReference type="EMBL" id="U00096">
    <property type="protein sequence ID" value="AAC76290.2"/>
    <property type="molecule type" value="Genomic_DNA"/>
</dbReference>
<dbReference type="EMBL" id="AP009048">
    <property type="protein sequence ID" value="BAE77299.1"/>
    <property type="molecule type" value="Genomic_DNA"/>
</dbReference>
<dbReference type="EMBL" id="M83198">
    <property type="protein sequence ID" value="AAA23747.1"/>
    <property type="status" value="ALT_INIT"/>
    <property type="molecule type" value="Genomic_DNA"/>
</dbReference>
<dbReference type="EMBL" id="S67010">
    <property type="protein sequence ID" value="AAB28768.1"/>
    <property type="molecule type" value="Genomic_DNA"/>
</dbReference>
<dbReference type="RefSeq" id="NP_417724.4">
    <property type="nucleotide sequence ID" value="NC_000913.3"/>
</dbReference>
<dbReference type="RefSeq" id="WP_001175728.1">
    <property type="nucleotide sequence ID" value="NZ_SSZK01000034.1"/>
</dbReference>
<dbReference type="SMR" id="P16256"/>
<dbReference type="BioGRID" id="4262451">
    <property type="interactions" value="174"/>
</dbReference>
<dbReference type="DIP" id="DIP-10439N"/>
<dbReference type="FunCoup" id="P16256">
    <property type="interactions" value="127"/>
</dbReference>
<dbReference type="STRING" id="511145.b3258"/>
<dbReference type="TCDB" id="2.A.21.1.1">
    <property type="family name" value="the solute:sodium symporter (sss) family"/>
</dbReference>
<dbReference type="PaxDb" id="511145-b3258"/>
<dbReference type="EnsemblBacteria" id="AAC76290">
    <property type="protein sequence ID" value="AAC76290"/>
    <property type="gene ID" value="b3258"/>
</dbReference>
<dbReference type="GeneID" id="93778729"/>
<dbReference type="GeneID" id="947752"/>
<dbReference type="KEGG" id="ecj:JW3226"/>
<dbReference type="KEGG" id="eco:b3258"/>
<dbReference type="KEGG" id="ecoc:C3026_17725"/>
<dbReference type="PATRIC" id="fig|511145.12.peg.3357"/>
<dbReference type="EchoBASE" id="EB0679"/>
<dbReference type="eggNOG" id="COG4145">
    <property type="taxonomic scope" value="Bacteria"/>
</dbReference>
<dbReference type="HOGENOM" id="CLU_018808_15_1_6"/>
<dbReference type="InParanoid" id="P16256"/>
<dbReference type="OMA" id="GWWGMRR"/>
<dbReference type="OrthoDB" id="9789704at2"/>
<dbReference type="PhylomeDB" id="P16256"/>
<dbReference type="BioCyc" id="EcoCyc:PANF-MONOMER"/>
<dbReference type="BioCyc" id="MetaCyc:PANF-MONOMER"/>
<dbReference type="PRO" id="PR:P16256"/>
<dbReference type="Proteomes" id="UP000000625">
    <property type="component" value="Chromosome"/>
</dbReference>
<dbReference type="GO" id="GO:0005886">
    <property type="term" value="C:plasma membrane"/>
    <property type="evidence" value="ECO:0000314"/>
    <property type="project" value="EcoCyc"/>
</dbReference>
<dbReference type="GO" id="GO:0015233">
    <property type="term" value="F:pantothenate transmembrane transporter activity"/>
    <property type="evidence" value="ECO:0000314"/>
    <property type="project" value="EcoCyc"/>
</dbReference>
<dbReference type="GO" id="GO:0015081">
    <property type="term" value="F:sodium ion transmembrane transporter activity"/>
    <property type="evidence" value="ECO:0007669"/>
    <property type="project" value="InterPro"/>
</dbReference>
<dbReference type="GO" id="GO:0015293">
    <property type="term" value="F:symporter activity"/>
    <property type="evidence" value="ECO:0000314"/>
    <property type="project" value="EcoCyc"/>
</dbReference>
<dbReference type="GO" id="GO:0015887">
    <property type="term" value="P:pantothenate transmembrane transport"/>
    <property type="evidence" value="ECO:0000314"/>
    <property type="project" value="EcoCyc"/>
</dbReference>
<dbReference type="GO" id="GO:0036376">
    <property type="term" value="P:sodium ion export across plasma membrane"/>
    <property type="evidence" value="ECO:0007669"/>
    <property type="project" value="InterPro"/>
</dbReference>
<dbReference type="CDD" id="cd10327">
    <property type="entry name" value="SLC5sbd_PanF"/>
    <property type="match status" value="1"/>
</dbReference>
<dbReference type="FunFam" id="1.20.1730.10:FF:000003">
    <property type="entry name" value="Sodium/pantothenate symporter"/>
    <property type="match status" value="1"/>
</dbReference>
<dbReference type="Gene3D" id="1.20.1730.10">
    <property type="entry name" value="Sodium/glucose cotransporter"/>
    <property type="match status" value="1"/>
</dbReference>
<dbReference type="InterPro" id="IPR038377">
    <property type="entry name" value="Na/Glc_symporter_sf"/>
</dbReference>
<dbReference type="InterPro" id="IPR011849">
    <property type="entry name" value="Na/pantothenate_symporter"/>
</dbReference>
<dbReference type="InterPro" id="IPR001734">
    <property type="entry name" value="Na/solute_symporter"/>
</dbReference>
<dbReference type="InterPro" id="IPR018212">
    <property type="entry name" value="Na/solute_symporter_CS"/>
</dbReference>
<dbReference type="InterPro" id="IPR050277">
    <property type="entry name" value="Sodium:Solute_Symporter"/>
</dbReference>
<dbReference type="NCBIfam" id="TIGR02119">
    <property type="entry name" value="panF"/>
    <property type="match status" value="1"/>
</dbReference>
<dbReference type="NCBIfam" id="TIGR00813">
    <property type="entry name" value="sss"/>
    <property type="match status" value="1"/>
</dbReference>
<dbReference type="PANTHER" id="PTHR48086">
    <property type="entry name" value="SODIUM/PROLINE SYMPORTER-RELATED"/>
    <property type="match status" value="1"/>
</dbReference>
<dbReference type="PANTHER" id="PTHR48086:SF4">
    <property type="entry name" value="SODIUM_PANTOTHENATE SYMPORTER"/>
    <property type="match status" value="1"/>
</dbReference>
<dbReference type="Pfam" id="PF00474">
    <property type="entry name" value="SSF"/>
    <property type="match status" value="1"/>
</dbReference>
<dbReference type="PROSITE" id="PS00456">
    <property type="entry name" value="NA_SOLUT_SYMP_1"/>
    <property type="match status" value="1"/>
</dbReference>
<dbReference type="PROSITE" id="PS00457">
    <property type="entry name" value="NA_SOLUT_SYMP_2"/>
    <property type="match status" value="1"/>
</dbReference>
<dbReference type="PROSITE" id="PS50283">
    <property type="entry name" value="NA_SOLUT_SYMP_3"/>
    <property type="match status" value="1"/>
</dbReference>
<gene>
    <name evidence="5" type="primary">panF</name>
    <name type="ordered locus">b3258</name>
    <name type="ordered locus">JW3226</name>
</gene>
<sequence>MQLEVILPLVAYLVVVFGISVYAMRKRSTGTFLNEYFLGSRSMGGIVLAMTLTATYISASSFIGGPGAAYKYGLGWVLLAMIQLPAVWLSLGILGKKFAILARRYNAVTLNDMLFARYQSRLLVWLASLSLLVAFVGAMTVQFIGGARLLETAAGIPYETGLLIFGISIALYTAFGGFRASVLNDTMQGLVMLIGTVVLLIGVVHAAGGLSNAVQTLQTIDPQLVTPQGADDILSPAFMTSFWVLVCFGVIGLPHTAVRCISYKDSKAVHRGIIIGTIVVAILMFGMHLAGALGRAVIPDLTVPDLVIPTLMVKVLPPFAAGIFLAAPMAAIMSTINAQLLQSSATIIKDLYLNIRPDQMQNETRLKRMSAVITLVLGALLLLAAWKPPEMIIWLNLLAFGGLEAVFLWPLVLGLYWERANAKGALSAMIVGGVLYAVLATLNIQYLGFHPIVPSLLLSLLAFLVGNRFGTSVPQATVLTTDK</sequence>